<sequence length="483" mass="52035">MLIFDHSRPGRTAAAQLPATGGDLGDLPAELRRKDAPALPEVSELDVVRHYTRLSQKNFSIDTQFYPLGSCTMKYNPRACNSLAMLPQFLARHPASPDETGQGFLASMFELQEMLKDVTGMAGVSMAPMAGAHGEFAGVAMIRAYHDAKGDAARREIIVPDAAHGTNPATATMCGYTVKEIPTDATGAVDLAALKAAVGPQTAGLMLTNPSTLGVFEKTIAEIQKIVHDAGGLLYYDGANLNAILGKVRPGDMGFDVIHMNLHKTFSTPHGGGGPGAGPVGVSGRLLPFMPIPLVLNDNGFYRLATEADLPQSIGRMSANMGNAGVLMRAYVYARLLGREGMHRVAEYATLNANYLMAKLREAGFDLAYPTRRASHEFIVTLKKLKDATGVSAMDFAKRLLDYGYHAPTTYFPLLVPECLLIEPTETESRETLDGFVDAMKTIKHEAETNPDLVKGAPYTLPVRRLDDVKAARELDLAYKPAA</sequence>
<comment type="function">
    <text evidence="1">The glycine cleavage system catalyzes the degradation of glycine. The P protein binds the alpha-amino group of glycine through its pyridoxal phosphate cofactor; CO(2) is released and the remaining methylamine moiety is then transferred to the lipoamide cofactor of the H protein.</text>
</comment>
<comment type="catalytic activity">
    <reaction evidence="1">
        <text>N(6)-[(R)-lipoyl]-L-lysyl-[glycine-cleavage complex H protein] + glycine + H(+) = N(6)-[(R)-S(8)-aminomethyldihydrolipoyl]-L-lysyl-[glycine-cleavage complex H protein] + CO2</text>
        <dbReference type="Rhea" id="RHEA:24304"/>
        <dbReference type="Rhea" id="RHEA-COMP:10494"/>
        <dbReference type="Rhea" id="RHEA-COMP:10495"/>
        <dbReference type="ChEBI" id="CHEBI:15378"/>
        <dbReference type="ChEBI" id="CHEBI:16526"/>
        <dbReference type="ChEBI" id="CHEBI:57305"/>
        <dbReference type="ChEBI" id="CHEBI:83099"/>
        <dbReference type="ChEBI" id="CHEBI:83143"/>
        <dbReference type="EC" id="1.4.4.2"/>
    </reaction>
</comment>
<comment type="cofactor">
    <cofactor evidence="1">
        <name>pyridoxal 5'-phosphate</name>
        <dbReference type="ChEBI" id="CHEBI:597326"/>
    </cofactor>
</comment>
<comment type="subunit">
    <text evidence="1">The glycine cleavage system is composed of four proteins: P, T, L and H. In this organism, the P 'protein' is a heterodimer of two subunits.</text>
</comment>
<comment type="similarity">
    <text evidence="1">Belongs to the GcvP family. C-terminal subunit subfamily.</text>
</comment>
<name>GCSPB_THIDA</name>
<keyword id="KW-0560">Oxidoreductase</keyword>
<keyword id="KW-0663">Pyridoxal phosphate</keyword>
<keyword id="KW-1185">Reference proteome</keyword>
<accession>Q3SMC1</accession>
<organism>
    <name type="scientific">Thiobacillus denitrificans (strain ATCC 25259 / T1)</name>
    <dbReference type="NCBI Taxonomy" id="292415"/>
    <lineage>
        <taxon>Bacteria</taxon>
        <taxon>Pseudomonadati</taxon>
        <taxon>Pseudomonadota</taxon>
        <taxon>Betaproteobacteria</taxon>
        <taxon>Nitrosomonadales</taxon>
        <taxon>Thiobacillaceae</taxon>
        <taxon>Thiobacillus</taxon>
    </lineage>
</organism>
<dbReference type="EC" id="1.4.4.2" evidence="1"/>
<dbReference type="EMBL" id="CP000116">
    <property type="protein sequence ID" value="AAZ96126.1"/>
    <property type="molecule type" value="Genomic_DNA"/>
</dbReference>
<dbReference type="RefSeq" id="WP_011310686.1">
    <property type="nucleotide sequence ID" value="NC_007404.1"/>
</dbReference>
<dbReference type="SMR" id="Q3SMC1"/>
<dbReference type="STRING" id="292415.Tbd_0173"/>
<dbReference type="KEGG" id="tbd:Tbd_0173"/>
<dbReference type="eggNOG" id="COG1003">
    <property type="taxonomic scope" value="Bacteria"/>
</dbReference>
<dbReference type="HOGENOM" id="CLU_004620_5_0_4"/>
<dbReference type="OrthoDB" id="9801272at2"/>
<dbReference type="Proteomes" id="UP000008291">
    <property type="component" value="Chromosome"/>
</dbReference>
<dbReference type="GO" id="GO:0005829">
    <property type="term" value="C:cytosol"/>
    <property type="evidence" value="ECO:0007669"/>
    <property type="project" value="TreeGrafter"/>
</dbReference>
<dbReference type="GO" id="GO:0005960">
    <property type="term" value="C:glycine cleavage complex"/>
    <property type="evidence" value="ECO:0007669"/>
    <property type="project" value="TreeGrafter"/>
</dbReference>
<dbReference type="GO" id="GO:0016594">
    <property type="term" value="F:glycine binding"/>
    <property type="evidence" value="ECO:0007669"/>
    <property type="project" value="TreeGrafter"/>
</dbReference>
<dbReference type="GO" id="GO:0004375">
    <property type="term" value="F:glycine dehydrogenase (decarboxylating) activity"/>
    <property type="evidence" value="ECO:0007669"/>
    <property type="project" value="UniProtKB-EC"/>
</dbReference>
<dbReference type="GO" id="GO:0030170">
    <property type="term" value="F:pyridoxal phosphate binding"/>
    <property type="evidence" value="ECO:0007669"/>
    <property type="project" value="TreeGrafter"/>
</dbReference>
<dbReference type="GO" id="GO:0019464">
    <property type="term" value="P:glycine decarboxylation via glycine cleavage system"/>
    <property type="evidence" value="ECO:0007669"/>
    <property type="project" value="UniProtKB-UniRule"/>
</dbReference>
<dbReference type="FunFam" id="3.40.640.10:FF:000224">
    <property type="entry name" value="Probable glycine dehydrogenase (decarboxylating) subunit 2"/>
    <property type="match status" value="1"/>
</dbReference>
<dbReference type="FunFam" id="3.90.1150.10:FF:000014">
    <property type="entry name" value="Probable glycine dehydrogenase (decarboxylating) subunit 2"/>
    <property type="match status" value="1"/>
</dbReference>
<dbReference type="Gene3D" id="6.20.440.10">
    <property type="match status" value="1"/>
</dbReference>
<dbReference type="Gene3D" id="3.90.1150.10">
    <property type="entry name" value="Aspartate Aminotransferase, domain 1"/>
    <property type="match status" value="1"/>
</dbReference>
<dbReference type="Gene3D" id="3.40.640.10">
    <property type="entry name" value="Type I PLP-dependent aspartate aminotransferase-like (Major domain)"/>
    <property type="match status" value="1"/>
</dbReference>
<dbReference type="HAMAP" id="MF_00713">
    <property type="entry name" value="GcvPB"/>
    <property type="match status" value="1"/>
</dbReference>
<dbReference type="InterPro" id="IPR000192">
    <property type="entry name" value="Aminotrans_V_dom"/>
</dbReference>
<dbReference type="InterPro" id="IPR023012">
    <property type="entry name" value="GcvPB"/>
</dbReference>
<dbReference type="InterPro" id="IPR049316">
    <property type="entry name" value="GDC-P_C"/>
</dbReference>
<dbReference type="InterPro" id="IPR020581">
    <property type="entry name" value="GDC_P"/>
</dbReference>
<dbReference type="InterPro" id="IPR015424">
    <property type="entry name" value="PyrdxlP-dep_Trfase"/>
</dbReference>
<dbReference type="InterPro" id="IPR015421">
    <property type="entry name" value="PyrdxlP-dep_Trfase_major"/>
</dbReference>
<dbReference type="InterPro" id="IPR015422">
    <property type="entry name" value="PyrdxlP-dep_Trfase_small"/>
</dbReference>
<dbReference type="NCBIfam" id="NF003346">
    <property type="entry name" value="PRK04366.1"/>
    <property type="match status" value="1"/>
</dbReference>
<dbReference type="PANTHER" id="PTHR11773:SF1">
    <property type="entry name" value="GLYCINE DEHYDROGENASE (DECARBOXYLATING), MITOCHONDRIAL"/>
    <property type="match status" value="1"/>
</dbReference>
<dbReference type="PANTHER" id="PTHR11773">
    <property type="entry name" value="GLYCINE DEHYDROGENASE, DECARBOXYLATING"/>
    <property type="match status" value="1"/>
</dbReference>
<dbReference type="Pfam" id="PF00266">
    <property type="entry name" value="Aminotran_5"/>
    <property type="match status" value="1"/>
</dbReference>
<dbReference type="Pfam" id="PF21478">
    <property type="entry name" value="GcvP2_C"/>
    <property type="match status" value="1"/>
</dbReference>
<dbReference type="SUPFAM" id="SSF53383">
    <property type="entry name" value="PLP-dependent transferases"/>
    <property type="match status" value="1"/>
</dbReference>
<gene>
    <name evidence="1" type="primary">gcvPB</name>
    <name type="ordered locus">Tbd_0173</name>
</gene>
<protein>
    <recommendedName>
        <fullName evidence="1">Probable glycine dehydrogenase (decarboxylating) subunit 2</fullName>
        <ecNumber evidence="1">1.4.4.2</ecNumber>
    </recommendedName>
    <alternativeName>
        <fullName evidence="1">Glycine cleavage system P-protein subunit 2</fullName>
    </alternativeName>
    <alternativeName>
        <fullName evidence="1">Glycine decarboxylase subunit 2</fullName>
    </alternativeName>
    <alternativeName>
        <fullName evidence="1">Glycine dehydrogenase (aminomethyl-transferring) subunit 2</fullName>
    </alternativeName>
</protein>
<reference key="1">
    <citation type="journal article" date="2006" name="J. Bacteriol.">
        <title>The genome sequence of the obligately chemolithoautotrophic, facultatively anaerobic bacterium Thiobacillus denitrificans.</title>
        <authorList>
            <person name="Beller H.R."/>
            <person name="Chain P.S."/>
            <person name="Letain T.E."/>
            <person name="Chakicherla A."/>
            <person name="Larimer F.W."/>
            <person name="Richardson P.M."/>
            <person name="Coleman M.A."/>
            <person name="Wood A.P."/>
            <person name="Kelly D.P."/>
        </authorList>
    </citation>
    <scope>NUCLEOTIDE SEQUENCE [LARGE SCALE GENOMIC DNA]</scope>
    <source>
        <strain>ATCC 25259 / T1</strain>
    </source>
</reference>
<proteinExistence type="inferred from homology"/>
<evidence type="ECO:0000255" key="1">
    <source>
        <dbReference type="HAMAP-Rule" id="MF_00713"/>
    </source>
</evidence>
<evidence type="ECO:0000256" key="2">
    <source>
        <dbReference type="SAM" id="MobiDB-lite"/>
    </source>
</evidence>
<feature type="chain" id="PRO_1000045710" description="Probable glycine dehydrogenase (decarboxylating) subunit 2">
    <location>
        <begin position="1"/>
        <end position="483"/>
    </location>
</feature>
<feature type="region of interest" description="Disordered" evidence="2">
    <location>
        <begin position="1"/>
        <end position="24"/>
    </location>
</feature>
<feature type="modified residue" description="N6-(pyridoxal phosphate)lysine" evidence="1">
    <location>
        <position position="264"/>
    </location>
</feature>